<gene>
    <name type="primary">PER1</name>
    <name type="synonym">P1</name>
    <name type="ordered locus">At1g05240</name>
    <name type="ORF">YUP8H12.15</name>
</gene>
<name>PER1_ARATH</name>
<keyword id="KW-0106">Calcium</keyword>
<keyword id="KW-1015">Disulfide bond</keyword>
<keyword id="KW-0325">Glycoprotein</keyword>
<keyword id="KW-0349">Heme</keyword>
<keyword id="KW-0376">Hydrogen peroxide</keyword>
<keyword id="KW-0408">Iron</keyword>
<keyword id="KW-0479">Metal-binding</keyword>
<keyword id="KW-0560">Oxidoreductase</keyword>
<keyword id="KW-0575">Peroxidase</keyword>
<keyword id="KW-1185">Reference proteome</keyword>
<keyword id="KW-0964">Secreted</keyword>
<keyword id="KW-0732">Signal</keyword>
<evidence type="ECO:0000255" key="1"/>
<evidence type="ECO:0000255" key="2">
    <source>
        <dbReference type="PROSITE-ProRule" id="PRU00297"/>
    </source>
</evidence>
<evidence type="ECO:0000255" key="3">
    <source>
        <dbReference type="PROSITE-ProRule" id="PRU10012"/>
    </source>
</evidence>
<evidence type="ECO:0000269" key="4">
    <source>
    </source>
</evidence>
<feature type="signal peptide" evidence="1">
    <location>
        <begin position="1"/>
        <end position="21"/>
    </location>
</feature>
<feature type="chain" id="PRO_0000023668" description="Peroxidase 1">
    <location>
        <begin position="22"/>
        <end position="325"/>
    </location>
</feature>
<feature type="active site" description="Proton acceptor" evidence="2 3">
    <location>
        <position position="66"/>
    </location>
</feature>
<feature type="binding site" evidence="2">
    <location>
        <position position="67"/>
    </location>
    <ligand>
        <name>Ca(2+)</name>
        <dbReference type="ChEBI" id="CHEBI:29108"/>
        <label>1</label>
    </ligand>
</feature>
<feature type="binding site" evidence="2">
    <location>
        <position position="70"/>
    </location>
    <ligand>
        <name>Ca(2+)</name>
        <dbReference type="ChEBI" id="CHEBI:29108"/>
        <label>1</label>
    </ligand>
</feature>
<feature type="binding site" evidence="2">
    <location>
        <position position="72"/>
    </location>
    <ligand>
        <name>Ca(2+)</name>
        <dbReference type="ChEBI" id="CHEBI:29108"/>
        <label>1</label>
    </ligand>
</feature>
<feature type="binding site" evidence="2">
    <location>
        <position position="74"/>
    </location>
    <ligand>
        <name>Ca(2+)</name>
        <dbReference type="ChEBI" id="CHEBI:29108"/>
        <label>1</label>
    </ligand>
</feature>
<feature type="binding site" evidence="2">
    <location>
        <position position="76"/>
    </location>
    <ligand>
        <name>Ca(2+)</name>
        <dbReference type="ChEBI" id="CHEBI:29108"/>
        <label>1</label>
    </ligand>
</feature>
<feature type="binding site" evidence="2">
    <location>
        <position position="161"/>
    </location>
    <ligand>
        <name>substrate</name>
    </ligand>
</feature>
<feature type="binding site" description="axial binding residue" evidence="2">
    <location>
        <position position="191"/>
    </location>
    <ligand>
        <name>heme b</name>
        <dbReference type="ChEBI" id="CHEBI:60344"/>
    </ligand>
    <ligandPart>
        <name>Fe</name>
        <dbReference type="ChEBI" id="CHEBI:18248"/>
    </ligandPart>
</feature>
<feature type="binding site" evidence="2">
    <location>
        <position position="192"/>
    </location>
    <ligand>
        <name>Ca(2+)</name>
        <dbReference type="ChEBI" id="CHEBI:29108"/>
        <label>2</label>
    </ligand>
</feature>
<feature type="binding site" evidence="2">
    <location>
        <position position="242"/>
    </location>
    <ligand>
        <name>Ca(2+)</name>
        <dbReference type="ChEBI" id="CHEBI:29108"/>
        <label>2</label>
    </ligand>
</feature>
<feature type="binding site" evidence="2">
    <location>
        <position position="245"/>
    </location>
    <ligand>
        <name>Ca(2+)</name>
        <dbReference type="ChEBI" id="CHEBI:29108"/>
        <label>2</label>
    </ligand>
</feature>
<feature type="binding site" evidence="2">
    <location>
        <position position="250"/>
    </location>
    <ligand>
        <name>Ca(2+)</name>
        <dbReference type="ChEBI" id="CHEBI:29108"/>
        <label>2</label>
    </ligand>
</feature>
<feature type="site" description="Transition state stabilizer" evidence="2">
    <location>
        <position position="62"/>
    </location>
</feature>
<feature type="glycosylation site" description="N-linked (GlcNAc...) asparagine" evidence="1">
    <location>
        <position position="207"/>
    </location>
</feature>
<feature type="disulfide bond" evidence="2">
    <location>
        <begin position="35"/>
        <end position="113"/>
    </location>
</feature>
<feature type="disulfide bond" evidence="2">
    <location>
        <begin position="68"/>
        <end position="73"/>
    </location>
</feature>
<feature type="disulfide bond" evidence="2">
    <location>
        <begin position="119"/>
        <end position="321"/>
    </location>
</feature>
<feature type="disulfide bond" evidence="2">
    <location>
        <begin position="198"/>
        <end position="230"/>
    </location>
</feature>
<organism>
    <name type="scientific">Arabidopsis thaliana</name>
    <name type="common">Mouse-ear cress</name>
    <dbReference type="NCBI Taxonomy" id="3702"/>
    <lineage>
        <taxon>Eukaryota</taxon>
        <taxon>Viridiplantae</taxon>
        <taxon>Streptophyta</taxon>
        <taxon>Embryophyta</taxon>
        <taxon>Tracheophyta</taxon>
        <taxon>Spermatophyta</taxon>
        <taxon>Magnoliopsida</taxon>
        <taxon>eudicotyledons</taxon>
        <taxon>Gunneridae</taxon>
        <taxon>Pentapetalae</taxon>
        <taxon>rosids</taxon>
        <taxon>malvids</taxon>
        <taxon>Brassicales</taxon>
        <taxon>Brassicaceae</taxon>
        <taxon>Camelineae</taxon>
        <taxon>Arabidopsis</taxon>
    </lineage>
</organism>
<comment type="function">
    <text>Removal of H(2)O(2), oxidation of toxic reductants, biosynthesis and degradation of lignin, suberization, auxin catabolism, response to environmental stresses such as wounding, pathogen attack and oxidative stress. These functions might be dependent on each isozyme/isoform in each plant tissue.</text>
</comment>
<comment type="catalytic activity">
    <reaction>
        <text>2 a phenolic donor + H2O2 = 2 a phenolic radical donor + 2 H2O</text>
        <dbReference type="Rhea" id="RHEA:56136"/>
        <dbReference type="ChEBI" id="CHEBI:15377"/>
        <dbReference type="ChEBI" id="CHEBI:16240"/>
        <dbReference type="ChEBI" id="CHEBI:139520"/>
        <dbReference type="ChEBI" id="CHEBI:139521"/>
        <dbReference type="EC" id="1.11.1.7"/>
    </reaction>
</comment>
<comment type="cofactor">
    <cofactor evidence="2">
        <name>heme b</name>
        <dbReference type="ChEBI" id="CHEBI:60344"/>
    </cofactor>
    <text evidence="2">Binds 1 heme b (iron(II)-protoporphyrin IX) group per subunit.</text>
</comment>
<comment type="cofactor">
    <cofactor evidence="2">
        <name>Ca(2+)</name>
        <dbReference type="ChEBI" id="CHEBI:29108"/>
    </cofactor>
    <text evidence="2">Binds 2 calcium ions per subunit.</text>
</comment>
<comment type="subcellular location">
    <subcellularLocation>
        <location evidence="2">Secreted</location>
    </subcellularLocation>
</comment>
<comment type="tissue specificity">
    <text>Slightly expressed in roots.</text>
</comment>
<comment type="induction">
    <text evidence="4">Up-regulated transiently by a cold treatment.</text>
</comment>
<comment type="miscellaneous">
    <text>There are 73 peroxidase genes in A.thaliana.</text>
</comment>
<comment type="similarity">
    <text evidence="2">Belongs to the peroxidase family. Classical plant (class III) peroxidase subfamily.</text>
</comment>
<reference key="1">
    <citation type="submission" date="1996-09" db="EMBL/GenBank/DDBJ databases">
        <title>From expressed sequence tags to structure, function, evolution and expression of 28 ER-targeted Arabidopsis peroxidases.</title>
        <authorList>
            <person name="Welinder K.G."/>
            <person name="Jespersen H.M."/>
            <person name="Kjaersgaard I.V.H."/>
            <person name="Justesen A.F."/>
            <person name="Oestergaard L."/>
            <person name="Abelskov A.K."/>
            <person name="Hansen L.N."/>
            <person name="Rasmussen S.K."/>
        </authorList>
    </citation>
    <scope>NUCLEOTIDE SEQUENCE [MRNA]</scope>
    <source>
        <strain>cv. Columbia</strain>
    </source>
</reference>
<reference key="2">
    <citation type="journal article" date="2000" name="Nature">
        <title>Sequence and analysis of chromosome 1 of the plant Arabidopsis thaliana.</title>
        <authorList>
            <person name="Theologis A."/>
            <person name="Ecker J.R."/>
            <person name="Palm C.J."/>
            <person name="Federspiel N.A."/>
            <person name="Kaul S."/>
            <person name="White O."/>
            <person name="Alonso J."/>
            <person name="Altafi H."/>
            <person name="Araujo R."/>
            <person name="Bowman C.L."/>
            <person name="Brooks S.Y."/>
            <person name="Buehler E."/>
            <person name="Chan A."/>
            <person name="Chao Q."/>
            <person name="Chen H."/>
            <person name="Cheuk R.F."/>
            <person name="Chin C.W."/>
            <person name="Chung M.K."/>
            <person name="Conn L."/>
            <person name="Conway A.B."/>
            <person name="Conway A.R."/>
            <person name="Creasy T.H."/>
            <person name="Dewar K."/>
            <person name="Dunn P."/>
            <person name="Etgu P."/>
            <person name="Feldblyum T.V."/>
            <person name="Feng J.-D."/>
            <person name="Fong B."/>
            <person name="Fujii C.Y."/>
            <person name="Gill J.E."/>
            <person name="Goldsmith A.D."/>
            <person name="Haas B."/>
            <person name="Hansen N.F."/>
            <person name="Hughes B."/>
            <person name="Huizar L."/>
            <person name="Hunter J.L."/>
            <person name="Jenkins J."/>
            <person name="Johnson-Hopson C."/>
            <person name="Khan S."/>
            <person name="Khaykin E."/>
            <person name="Kim C.J."/>
            <person name="Koo H.L."/>
            <person name="Kremenetskaia I."/>
            <person name="Kurtz D.B."/>
            <person name="Kwan A."/>
            <person name="Lam B."/>
            <person name="Langin-Hooper S."/>
            <person name="Lee A."/>
            <person name="Lee J.M."/>
            <person name="Lenz C.A."/>
            <person name="Li J.H."/>
            <person name="Li Y.-P."/>
            <person name="Lin X."/>
            <person name="Liu S.X."/>
            <person name="Liu Z.A."/>
            <person name="Luros J.S."/>
            <person name="Maiti R."/>
            <person name="Marziali A."/>
            <person name="Militscher J."/>
            <person name="Miranda M."/>
            <person name="Nguyen M."/>
            <person name="Nierman W.C."/>
            <person name="Osborne B.I."/>
            <person name="Pai G."/>
            <person name="Peterson J."/>
            <person name="Pham P.K."/>
            <person name="Rizzo M."/>
            <person name="Rooney T."/>
            <person name="Rowley D."/>
            <person name="Sakano H."/>
            <person name="Salzberg S.L."/>
            <person name="Schwartz J.R."/>
            <person name="Shinn P."/>
            <person name="Southwick A.M."/>
            <person name="Sun H."/>
            <person name="Tallon L.J."/>
            <person name="Tambunga G."/>
            <person name="Toriumi M.J."/>
            <person name="Town C.D."/>
            <person name="Utterback T."/>
            <person name="Van Aken S."/>
            <person name="Vaysberg M."/>
            <person name="Vysotskaia V.S."/>
            <person name="Walker M."/>
            <person name="Wu D."/>
            <person name="Yu G."/>
            <person name="Fraser C.M."/>
            <person name="Venter J.C."/>
            <person name="Davis R.W."/>
        </authorList>
    </citation>
    <scope>NUCLEOTIDE SEQUENCE [LARGE SCALE GENOMIC DNA]</scope>
    <source>
        <strain>cv. Columbia</strain>
    </source>
</reference>
<reference key="3">
    <citation type="journal article" date="2017" name="Plant J.">
        <title>Araport11: a complete reannotation of the Arabidopsis thaliana reference genome.</title>
        <authorList>
            <person name="Cheng C.Y."/>
            <person name="Krishnakumar V."/>
            <person name="Chan A.P."/>
            <person name="Thibaud-Nissen F."/>
            <person name="Schobel S."/>
            <person name="Town C.D."/>
        </authorList>
    </citation>
    <scope>GENOME REANNOTATION</scope>
    <source>
        <strain>cv. Columbia</strain>
    </source>
</reference>
<reference key="4">
    <citation type="journal article" date="2003" name="Science">
        <title>Empirical analysis of transcriptional activity in the Arabidopsis genome.</title>
        <authorList>
            <person name="Yamada K."/>
            <person name="Lim J."/>
            <person name="Dale J.M."/>
            <person name="Chen H."/>
            <person name="Shinn P."/>
            <person name="Palm C.J."/>
            <person name="Southwick A.M."/>
            <person name="Wu H.C."/>
            <person name="Kim C.J."/>
            <person name="Nguyen M."/>
            <person name="Pham P.K."/>
            <person name="Cheuk R.F."/>
            <person name="Karlin-Newmann G."/>
            <person name="Liu S.X."/>
            <person name="Lam B."/>
            <person name="Sakano H."/>
            <person name="Wu T."/>
            <person name="Yu G."/>
            <person name="Miranda M."/>
            <person name="Quach H.L."/>
            <person name="Tripp M."/>
            <person name="Chang C.H."/>
            <person name="Lee J.M."/>
            <person name="Toriumi M.J."/>
            <person name="Chan M.M."/>
            <person name="Tang C.C."/>
            <person name="Onodera C.S."/>
            <person name="Deng J.M."/>
            <person name="Akiyama K."/>
            <person name="Ansari Y."/>
            <person name="Arakawa T."/>
            <person name="Banh J."/>
            <person name="Banno F."/>
            <person name="Bowser L."/>
            <person name="Brooks S.Y."/>
            <person name="Carninci P."/>
            <person name="Chao Q."/>
            <person name="Choy N."/>
            <person name="Enju A."/>
            <person name="Goldsmith A.D."/>
            <person name="Gurjal M."/>
            <person name="Hansen N.F."/>
            <person name="Hayashizaki Y."/>
            <person name="Johnson-Hopson C."/>
            <person name="Hsuan V.W."/>
            <person name="Iida K."/>
            <person name="Karnes M."/>
            <person name="Khan S."/>
            <person name="Koesema E."/>
            <person name="Ishida J."/>
            <person name="Jiang P.X."/>
            <person name="Jones T."/>
            <person name="Kawai J."/>
            <person name="Kamiya A."/>
            <person name="Meyers C."/>
            <person name="Nakajima M."/>
            <person name="Narusaka M."/>
            <person name="Seki M."/>
            <person name="Sakurai T."/>
            <person name="Satou M."/>
            <person name="Tamse R."/>
            <person name="Vaysberg M."/>
            <person name="Wallender E.K."/>
            <person name="Wong C."/>
            <person name="Yamamura Y."/>
            <person name="Yuan S."/>
            <person name="Shinozaki K."/>
            <person name="Davis R.W."/>
            <person name="Theologis A."/>
            <person name="Ecker J.R."/>
        </authorList>
    </citation>
    <scope>NUCLEOTIDE SEQUENCE [LARGE SCALE MRNA]</scope>
    <source>
        <strain>cv. Columbia</strain>
    </source>
</reference>
<reference key="5">
    <citation type="journal article" date="1998" name="FEBS Lett.">
        <title>Computational analyses and annotations of the Arabidopsis peroxidase gene family.</title>
        <authorList>
            <person name="Oestergaard L."/>
            <person name="Pedersen A.G."/>
            <person name="Jespersen H.M."/>
            <person name="Brunak S."/>
            <person name="Welinder K.G."/>
        </authorList>
    </citation>
    <scope>CHARACTERIZATION</scope>
    <source>
        <strain>cv. Columbia</strain>
    </source>
</reference>
<reference key="6">
    <citation type="journal article" date="2002" name="Plant Cell">
        <title>Arabidopsis transcriptome profiling indicates that multiple regulatory pathways are activated during cold acclimation in addition to the CBF cold response pathway.</title>
        <authorList>
            <person name="Fowler S."/>
            <person name="Thomashow M.F."/>
        </authorList>
    </citation>
    <scope>INDUCTION</scope>
    <source>
        <strain>cv. Columbia</strain>
    </source>
</reference>
<reference key="7">
    <citation type="journal article" date="2002" name="Gene">
        <title>Analysis and expression of the class III peroxidase large gene family in Arabidopsis thaliana.</title>
        <authorList>
            <person name="Tognolli M."/>
            <person name="Penel C."/>
            <person name="Greppin H."/>
            <person name="Simon P."/>
        </authorList>
    </citation>
    <scope>GENE FAMILY ORGANIZATION</scope>
    <scope>NOMENCLATURE</scope>
    <source>
        <strain>cv. Columbia</strain>
    </source>
</reference>
<sequence>MAIKNILALVVLLSVVGVSVAIPQLLDLDYYRSKCPKAEEIVRGVTVQYVSRQKTLAAKLLRMHFHDCFVRGCDGSVLLKSAKNDAERDAVPNLTLKGYEVVDAAKTALERKCPNLISCADVLALVARDAVAVIGGPWWPVPLGRRDGRISKLNDALLNLPSPFADIKTLKKNFANKGLNAKDLVVLSGGHTIGISSCALVNSRLYNFTGKGDSDPSMNPSYVRELKRKCPPTDFRTSLNMDPGSALTFDTHYFKVVAQKKGLFTSDSTLLDDIETKNYVQTQAILPPVFSSFNKDFSDSMVKLGFVQILTGKNGEIRKRCAFPN</sequence>
<dbReference type="EC" id="1.11.1.7"/>
<dbReference type="EMBL" id="X98802">
    <property type="protein sequence ID" value="CAA67334.1"/>
    <property type="molecule type" value="mRNA"/>
</dbReference>
<dbReference type="EMBL" id="AC000098">
    <property type="protein sequence ID" value="AAB71454.1"/>
    <property type="molecule type" value="Genomic_DNA"/>
</dbReference>
<dbReference type="EMBL" id="CP002684">
    <property type="protein sequence ID" value="AEE27813.1"/>
    <property type="molecule type" value="Genomic_DNA"/>
</dbReference>
<dbReference type="EMBL" id="AY123989">
    <property type="protein sequence ID" value="AAM74501.1"/>
    <property type="molecule type" value="mRNA"/>
</dbReference>
<dbReference type="EMBL" id="BT000584">
    <property type="protein sequence ID" value="AAN18153.1"/>
    <property type="molecule type" value="mRNA"/>
</dbReference>
<dbReference type="PIR" id="A86187">
    <property type="entry name" value="A86187"/>
</dbReference>
<dbReference type="RefSeq" id="NP_563732.1">
    <property type="nucleotide sequence ID" value="NM_100403.4"/>
</dbReference>
<dbReference type="RefSeq" id="NP_563733.1">
    <property type="nucleotide sequence ID" value="NM_100404.4"/>
</dbReference>
<dbReference type="SMR" id="P0DI10"/>
<dbReference type="FunCoup" id="P0DI10">
    <property type="interactions" value="128"/>
</dbReference>
<dbReference type="STRING" id="3702.P0DI10"/>
<dbReference type="PeroxiBase" id="77">
    <property type="entry name" value="AtPrx01"/>
</dbReference>
<dbReference type="GlyCosmos" id="P0DI10">
    <property type="glycosylation" value="1 site, No reported glycans"/>
</dbReference>
<dbReference type="GlyGen" id="P0DI10">
    <property type="glycosylation" value="1 site"/>
</dbReference>
<dbReference type="PaxDb" id="3702-AT1G05240.1"/>
<dbReference type="EnsemblPlants" id="AT1G05240.1">
    <property type="protein sequence ID" value="AT1G05240.1"/>
    <property type="gene ID" value="AT1G05240"/>
</dbReference>
<dbReference type="EnsemblPlants" id="AT1G05250.1">
    <property type="protein sequence ID" value="AT1G05250.1"/>
    <property type="gene ID" value="AT1G05250"/>
</dbReference>
<dbReference type="GeneID" id="839237"/>
<dbReference type="Gramene" id="AT1G05240.1">
    <property type="protein sequence ID" value="AT1G05240.1"/>
    <property type="gene ID" value="AT1G05240"/>
</dbReference>
<dbReference type="Gramene" id="AT1G05250.1">
    <property type="protein sequence ID" value="AT1G05250.1"/>
    <property type="gene ID" value="AT1G05250"/>
</dbReference>
<dbReference type="KEGG" id="ath:AT1G05240"/>
<dbReference type="KEGG" id="ath:AT1G05250"/>
<dbReference type="Araport" id="AT1G05240"/>
<dbReference type="TAIR" id="AT1G05240">
    <property type="gene designation" value="PR9"/>
</dbReference>
<dbReference type="eggNOG" id="ENOG502QQVF">
    <property type="taxonomic scope" value="Eukaryota"/>
</dbReference>
<dbReference type="HOGENOM" id="CLU_010543_0_3_1"/>
<dbReference type="InParanoid" id="P0DI10"/>
<dbReference type="OMA" id="CGLINNR"/>
<dbReference type="PhylomeDB" id="P0DI10"/>
<dbReference type="PRO" id="PR:P0DI10"/>
<dbReference type="Proteomes" id="UP000006548">
    <property type="component" value="Chromosome 1"/>
</dbReference>
<dbReference type="ExpressionAtlas" id="P0DI10">
    <property type="expression patterns" value="baseline and differential"/>
</dbReference>
<dbReference type="GO" id="GO:0005576">
    <property type="term" value="C:extracellular region"/>
    <property type="evidence" value="ECO:0007669"/>
    <property type="project" value="UniProtKB-SubCell"/>
</dbReference>
<dbReference type="GO" id="GO:0009505">
    <property type="term" value="C:plant-type cell wall"/>
    <property type="evidence" value="ECO:0007005"/>
    <property type="project" value="TAIR"/>
</dbReference>
<dbReference type="GO" id="GO:0009506">
    <property type="term" value="C:plasmodesma"/>
    <property type="evidence" value="ECO:0007005"/>
    <property type="project" value="TAIR"/>
</dbReference>
<dbReference type="GO" id="GO:0020037">
    <property type="term" value="F:heme binding"/>
    <property type="evidence" value="ECO:0007669"/>
    <property type="project" value="InterPro"/>
</dbReference>
<dbReference type="GO" id="GO:0140825">
    <property type="term" value="F:lactoperoxidase activity"/>
    <property type="evidence" value="ECO:0007669"/>
    <property type="project" value="UniProtKB-EC"/>
</dbReference>
<dbReference type="GO" id="GO:0046872">
    <property type="term" value="F:metal ion binding"/>
    <property type="evidence" value="ECO:0007669"/>
    <property type="project" value="UniProtKB-KW"/>
</dbReference>
<dbReference type="GO" id="GO:0042744">
    <property type="term" value="P:hydrogen peroxide catabolic process"/>
    <property type="evidence" value="ECO:0007669"/>
    <property type="project" value="UniProtKB-KW"/>
</dbReference>
<dbReference type="GO" id="GO:0006979">
    <property type="term" value="P:response to oxidative stress"/>
    <property type="evidence" value="ECO:0007669"/>
    <property type="project" value="InterPro"/>
</dbReference>
<dbReference type="CDD" id="cd00693">
    <property type="entry name" value="secretory_peroxidase"/>
    <property type="match status" value="1"/>
</dbReference>
<dbReference type="FunFam" id="1.10.420.10:FF:000008">
    <property type="entry name" value="Peroxidase"/>
    <property type="match status" value="1"/>
</dbReference>
<dbReference type="FunFam" id="1.10.520.10:FF:000001">
    <property type="entry name" value="Peroxidase"/>
    <property type="match status" value="1"/>
</dbReference>
<dbReference type="Gene3D" id="1.10.520.10">
    <property type="match status" value="1"/>
</dbReference>
<dbReference type="Gene3D" id="1.10.420.10">
    <property type="entry name" value="Peroxidase, domain 2"/>
    <property type="match status" value="1"/>
</dbReference>
<dbReference type="InterPro" id="IPR002016">
    <property type="entry name" value="Haem_peroxidase"/>
</dbReference>
<dbReference type="InterPro" id="IPR010255">
    <property type="entry name" value="Haem_peroxidase_sf"/>
</dbReference>
<dbReference type="InterPro" id="IPR000823">
    <property type="entry name" value="Peroxidase_pln"/>
</dbReference>
<dbReference type="InterPro" id="IPR019794">
    <property type="entry name" value="Peroxidases_AS"/>
</dbReference>
<dbReference type="InterPro" id="IPR019793">
    <property type="entry name" value="Peroxidases_heam-ligand_BS"/>
</dbReference>
<dbReference type="InterPro" id="IPR033905">
    <property type="entry name" value="Secretory_peroxidase"/>
</dbReference>
<dbReference type="PANTHER" id="PTHR31235">
    <property type="entry name" value="PEROXIDASE 25-RELATED"/>
    <property type="match status" value="1"/>
</dbReference>
<dbReference type="Pfam" id="PF00141">
    <property type="entry name" value="peroxidase"/>
    <property type="match status" value="1"/>
</dbReference>
<dbReference type="PRINTS" id="PR00458">
    <property type="entry name" value="PEROXIDASE"/>
</dbReference>
<dbReference type="PRINTS" id="PR00461">
    <property type="entry name" value="PLPEROXIDASE"/>
</dbReference>
<dbReference type="SUPFAM" id="SSF48113">
    <property type="entry name" value="Heme-dependent peroxidases"/>
    <property type="match status" value="1"/>
</dbReference>
<dbReference type="PROSITE" id="PS00435">
    <property type="entry name" value="PEROXIDASE_1"/>
    <property type="match status" value="1"/>
</dbReference>
<dbReference type="PROSITE" id="PS00436">
    <property type="entry name" value="PEROXIDASE_2"/>
    <property type="match status" value="1"/>
</dbReference>
<dbReference type="PROSITE" id="PS50873">
    <property type="entry name" value="PEROXIDASE_4"/>
    <property type="match status" value="1"/>
</dbReference>
<protein>
    <recommendedName>
        <fullName>Peroxidase 1</fullName>
        <ecNumber>1.11.1.7</ecNumber>
    </recommendedName>
    <alternativeName>
        <fullName>ATP11a</fullName>
    </alternativeName>
    <alternativeName>
        <fullName>Atperox P1</fullName>
    </alternativeName>
</protein>
<proteinExistence type="evidence at protein level"/>
<accession>P0DI10</accession>
<accession>Q96506</accession>